<evidence type="ECO:0000250" key="1"/>
<evidence type="ECO:0000250" key="2">
    <source>
        <dbReference type="UniProtKB" id="Q5VSL9"/>
    </source>
</evidence>
<evidence type="ECO:0000256" key="3">
    <source>
        <dbReference type="SAM" id="MobiDB-lite"/>
    </source>
</evidence>
<evidence type="ECO:0000269" key="4">
    <source>
    </source>
</evidence>
<evidence type="ECO:0000305" key="5"/>
<organism>
    <name type="scientific">Danio rerio</name>
    <name type="common">Zebrafish</name>
    <name type="synonym">Brachydanio rerio</name>
    <dbReference type="NCBI Taxonomy" id="7955"/>
    <lineage>
        <taxon>Eukaryota</taxon>
        <taxon>Metazoa</taxon>
        <taxon>Chordata</taxon>
        <taxon>Craniata</taxon>
        <taxon>Vertebrata</taxon>
        <taxon>Euteleostomi</taxon>
        <taxon>Actinopterygii</taxon>
        <taxon>Neopterygii</taxon>
        <taxon>Teleostei</taxon>
        <taxon>Ostariophysi</taxon>
        <taxon>Cypriniformes</taxon>
        <taxon>Danionidae</taxon>
        <taxon>Danioninae</taxon>
        <taxon>Danio</taxon>
    </lineage>
</organism>
<feature type="chain" id="PRO_0000187021" description="Striatin-interacting protein 1 homolog">
    <location>
        <begin position="1"/>
        <end position="813"/>
    </location>
</feature>
<feature type="region of interest" description="Disordered" evidence="3">
    <location>
        <begin position="1"/>
        <end position="41"/>
    </location>
</feature>
<feature type="region of interest" description="Disordered" evidence="3">
    <location>
        <begin position="307"/>
        <end position="379"/>
    </location>
</feature>
<feature type="compositionally biased region" description="Polar residues" evidence="3">
    <location>
        <begin position="9"/>
        <end position="18"/>
    </location>
</feature>
<feature type="compositionally biased region" description="Basic and acidic residues" evidence="3">
    <location>
        <begin position="22"/>
        <end position="35"/>
    </location>
</feature>
<feature type="compositionally biased region" description="Low complexity" evidence="3">
    <location>
        <begin position="307"/>
        <end position="316"/>
    </location>
</feature>
<feature type="compositionally biased region" description="Basic and acidic residues" evidence="3">
    <location>
        <begin position="331"/>
        <end position="352"/>
    </location>
</feature>
<feature type="compositionally biased region" description="Acidic residues" evidence="3">
    <location>
        <begin position="353"/>
        <end position="367"/>
    </location>
</feature>
<feature type="modified residue" description="Phosphoserine" evidence="4">
    <location>
        <position position="310"/>
    </location>
</feature>
<comment type="function">
    <text evidence="2">Plays a role in the regulation of cell morphology and cytoskeletal organization. Required in the cortical actin filament dynamics and cell shape. Part of the striatin-interacting phosphatase and kinase (STRIPAK) complexes. STRIPAK complexes have critical roles in protein (de)phosphorylation and are regulators of multiple signaling pathways including Hippo, MAPK, nuclear receptor and cytoskeleton remodeling. Different types of STRIPAK complexes are involved in a variety of biological processes such as cell growth, differentiation, apoptosis, metabolism and immune regulation.</text>
</comment>
<comment type="subunit">
    <text evidence="2">Part of the core of STRIPAK complexes composed of PP2A catalytic and scaffolding subunits, the striatins (PP2A regulatory subunits), the striatin-associated proteins MOB4, STRIP1 and STRIP2, PDCD10 and members of the STE20 kinases, such as STK24 and STK26.</text>
</comment>
<comment type="subcellular location">
    <subcellularLocation>
        <location evidence="1">Cytoplasm</location>
    </subcellularLocation>
    <text evidence="1">Enriched on the plasma membrane.</text>
</comment>
<comment type="similarity">
    <text evidence="5">Belongs to the STRIP family.</text>
</comment>
<reference key="1">
    <citation type="submission" date="2003-01" db="EMBL/GenBank/DDBJ databases">
        <authorList>
            <consortium name="NIH - Zebrafish Gene Collection (ZGC) project"/>
        </authorList>
    </citation>
    <scope>NUCLEOTIDE SEQUENCE [LARGE SCALE MRNA]</scope>
    <source>
        <strain>AB</strain>
    </source>
</reference>
<reference key="2">
    <citation type="journal article" date="2008" name="J. Proteome Res.">
        <title>Online automated in vivo zebrafish phosphoproteomics: from large-scale analysis down to a single embryo.</title>
        <authorList>
            <person name="Lemeer S."/>
            <person name="Pinkse M.W.H."/>
            <person name="Mohammed S."/>
            <person name="van Breukelen B."/>
            <person name="den Hertog J."/>
            <person name="Slijper M."/>
            <person name="Heck A.J.R."/>
        </authorList>
    </citation>
    <scope>PHOSPHORYLATION [LARGE SCALE ANALYSIS] AT SER-310</scope>
    <scope>IDENTIFICATION BY MASS SPECTROMETRY</scope>
    <source>
        <tissue>Embryo</tissue>
    </source>
</reference>
<dbReference type="EMBL" id="BC044205">
    <property type="protein sequence ID" value="AAH44205.1"/>
    <property type="molecule type" value="mRNA"/>
</dbReference>
<dbReference type="SMR" id="Q803T2"/>
<dbReference type="FunCoup" id="Q803T2">
    <property type="interactions" value="1555"/>
</dbReference>
<dbReference type="STRING" id="7955.ENSDARP00000103366"/>
<dbReference type="iPTMnet" id="Q803T2"/>
<dbReference type="PaxDb" id="7955-ENSDARP00000103366"/>
<dbReference type="AGR" id="ZFIN:ZDB-GENE-040426-2927"/>
<dbReference type="ZFIN" id="ZDB-GENE-040426-2927">
    <property type="gene designation" value="strip1"/>
</dbReference>
<dbReference type="eggNOG" id="KOG3680">
    <property type="taxonomic scope" value="Eukaryota"/>
</dbReference>
<dbReference type="InParanoid" id="Q803T2"/>
<dbReference type="PhylomeDB" id="Q803T2"/>
<dbReference type="PRO" id="PR:Q803T2"/>
<dbReference type="Proteomes" id="UP000000437">
    <property type="component" value="Unplaced"/>
</dbReference>
<dbReference type="GO" id="GO:0005829">
    <property type="term" value="C:cytosol"/>
    <property type="evidence" value="ECO:0000318"/>
    <property type="project" value="GO_Central"/>
</dbReference>
<dbReference type="GO" id="GO:0090443">
    <property type="term" value="C:FAR/SIN/STRIPAK complex"/>
    <property type="evidence" value="ECO:0000250"/>
    <property type="project" value="UniProtKB"/>
</dbReference>
<dbReference type="GO" id="GO:0030866">
    <property type="term" value="P:cortical actin cytoskeleton organization"/>
    <property type="evidence" value="ECO:0000250"/>
    <property type="project" value="UniProtKB"/>
</dbReference>
<dbReference type="GO" id="GO:0007010">
    <property type="term" value="P:cytoskeleton organization"/>
    <property type="evidence" value="ECO:0000318"/>
    <property type="project" value="GO_Central"/>
</dbReference>
<dbReference type="GO" id="GO:0060047">
    <property type="term" value="P:heart contraction"/>
    <property type="evidence" value="ECO:0000315"/>
    <property type="project" value="ZFIN"/>
</dbReference>
<dbReference type="GO" id="GO:0022604">
    <property type="term" value="P:regulation of cell morphogenesis"/>
    <property type="evidence" value="ECO:0000250"/>
    <property type="project" value="UniProtKB"/>
</dbReference>
<dbReference type="InterPro" id="IPR040185">
    <property type="entry name" value="Far11/STRP"/>
</dbReference>
<dbReference type="InterPro" id="IPR021819">
    <property type="entry name" value="Far11/STRP_C"/>
</dbReference>
<dbReference type="InterPro" id="IPR012486">
    <property type="entry name" value="Far11/STRP_N"/>
</dbReference>
<dbReference type="PANTHER" id="PTHR13239">
    <property type="entry name" value="PROTEIN REQUIRED FOR HYPHAL ANASTOMOSIS HAM-2"/>
    <property type="match status" value="1"/>
</dbReference>
<dbReference type="PANTHER" id="PTHR13239:SF7">
    <property type="entry name" value="STRIATIN-INTERACTING PROTEIN 1"/>
    <property type="match status" value="1"/>
</dbReference>
<dbReference type="Pfam" id="PF11882">
    <property type="entry name" value="DUF3402"/>
    <property type="match status" value="2"/>
</dbReference>
<dbReference type="Pfam" id="PF07923">
    <property type="entry name" value="N1221"/>
    <property type="match status" value="1"/>
</dbReference>
<dbReference type="SMART" id="SM01293">
    <property type="entry name" value="DUF3402"/>
    <property type="match status" value="1"/>
</dbReference>
<dbReference type="SMART" id="SM01292">
    <property type="entry name" value="N1221"/>
    <property type="match status" value="1"/>
</dbReference>
<protein>
    <recommendedName>
        <fullName>Striatin-interacting protein 1 homolog</fullName>
    </recommendedName>
</protein>
<accession>Q803T2</accession>
<keyword id="KW-0963">Cytoplasm</keyword>
<keyword id="KW-0597">Phosphoprotein</keyword>
<keyword id="KW-1185">Reference proteome</keyword>
<proteinExistence type="evidence at protein level"/>
<name>STRP1_DANRE</name>
<gene>
    <name type="primary">strip1</name>
    <name type="synonym">fam40a</name>
</gene>
<sequence length="813" mass="93600">MDGVGLCANNKQKQNQMLPNKMRGEFTRNQRKDSEGLSEAPDLEFEYSDADKWTAELSELYSYTEGPEFLLNRKCFEEDFHTHLPDQKWTELDSVQRRAHAMRLLDGLEVIGRERRLKVARAILYMAQGTFGECSSELEVQHWMRYNVFLLLDVGAFTALVELLNMEIDNSAACSSAVRKPAISLADSTDLRVLLNIMYLMVETIQREEPTDSPEWRTIRETFKSELGSPLYNHEPVSVMLFGMVTKFCSGHAPHFPMKKVLLLLWKTILFTLGGFEQLQSCKISRRAALGLPPLPEDSIRVVRSMRAASPPASASDLIEQQQRRARREHKALIKQDNLDTFNEKDPYKADDSHEDEEENDDNDNSLEAEPFPLERDEVMPPPIPHPPTERMCFPKGLPWAPKVREKDIESFLESSRSKFIGYTLGNDTDTVVGLPRPIHESIKTLKQHKYVSIAEVQIAKEEAFQKTPLSGGEEELELCATELLYQGILPSLPQYMIALLKILLAAAPTSKAKTDSINILADVLPEEMPTTVLQSMKLGVDVNRHKEIIVKAISAILLLLLKHFKLNHVYQFEYMAQHLVFANCIPLILKFFNQNIMSYITAKNSISALDFPHCVIHELPELTAESLEAGDNNQFCWRNLFSCINLLRILNKLTKWKHSRTMMLVVFKSAPILKRALKVKQAMMQLYVLKLLKVQTKYLGRQWRKGNMKTMSAIYQKVRHRLNDDWAYGNDLDARPWDFQAEECALRANIERFNSRRYDKNQSNPEFLPVDNCLQSVLGQRIDLPEDFQMNYDLWLEREVFSKPISWEELLQ</sequence>